<feature type="chain" id="PRO_1000119467" description="NAD-capped RNA hydrolase NudC">
    <location>
        <begin position="1"/>
        <end position="276"/>
    </location>
</feature>
<feature type="domain" description="Nudix hydrolase" evidence="1">
    <location>
        <begin position="139"/>
        <end position="262"/>
    </location>
</feature>
<feature type="short sequence motif" description="Nudix box" evidence="1">
    <location>
        <begin position="173"/>
        <end position="194"/>
    </location>
</feature>
<feature type="binding site" evidence="1">
    <location>
        <position position="82"/>
    </location>
    <ligand>
        <name>substrate</name>
    </ligand>
</feature>
<feature type="binding site" evidence="1">
    <location>
        <position position="112"/>
    </location>
    <ligand>
        <name>Zn(2+)</name>
        <dbReference type="ChEBI" id="CHEBI:29105"/>
    </ligand>
</feature>
<feature type="binding site" evidence="1">
    <location>
        <position position="115"/>
    </location>
    <ligand>
        <name>Zn(2+)</name>
        <dbReference type="ChEBI" id="CHEBI:29105"/>
    </ligand>
</feature>
<feature type="binding site" evidence="1">
    <location>
        <position position="125"/>
    </location>
    <ligand>
        <name>substrate</name>
    </ligand>
</feature>
<feature type="binding site" evidence="1">
    <location>
        <position position="130"/>
    </location>
    <ligand>
        <name>Zn(2+)</name>
        <dbReference type="ChEBI" id="CHEBI:29105"/>
    </ligand>
</feature>
<feature type="binding site" evidence="1">
    <location>
        <position position="133"/>
    </location>
    <ligand>
        <name>Zn(2+)</name>
        <dbReference type="ChEBI" id="CHEBI:29105"/>
    </ligand>
</feature>
<feature type="binding site" evidence="1">
    <location>
        <position position="138"/>
    </location>
    <ligand>
        <name>substrate</name>
    </ligand>
</feature>
<feature type="binding site" evidence="1">
    <location>
        <position position="172"/>
    </location>
    <ligand>
        <name>a divalent metal cation</name>
        <dbReference type="ChEBI" id="CHEBI:60240"/>
        <label>1</label>
    </ligand>
</feature>
<feature type="binding site" evidence="1">
    <location>
        <position position="188"/>
    </location>
    <ligand>
        <name>a divalent metal cation</name>
        <dbReference type="ChEBI" id="CHEBI:60240"/>
        <label>2</label>
    </ligand>
</feature>
<feature type="binding site" evidence="1">
    <location>
        <position position="188"/>
    </location>
    <ligand>
        <name>a divalent metal cation</name>
        <dbReference type="ChEBI" id="CHEBI:60240"/>
        <label>3</label>
    </ligand>
</feature>
<feature type="binding site" evidence="1">
    <location>
        <position position="192"/>
    </location>
    <ligand>
        <name>a divalent metal cation</name>
        <dbReference type="ChEBI" id="CHEBI:60240"/>
        <label>1</label>
    </ligand>
</feature>
<feature type="binding site" evidence="1">
    <location>
        <position position="192"/>
    </location>
    <ligand>
        <name>a divalent metal cation</name>
        <dbReference type="ChEBI" id="CHEBI:60240"/>
        <label>3</label>
    </ligand>
</feature>
<feature type="binding site" evidence="1">
    <location>
        <begin position="206"/>
        <end position="213"/>
    </location>
    <ligand>
        <name>substrate</name>
    </ligand>
</feature>
<feature type="binding site" evidence="1">
    <location>
        <position position="233"/>
    </location>
    <ligand>
        <name>a divalent metal cation</name>
        <dbReference type="ChEBI" id="CHEBI:60240"/>
        <label>1</label>
    </ligand>
</feature>
<feature type="binding site" evidence="1">
    <location>
        <position position="233"/>
    </location>
    <ligand>
        <name>a divalent metal cation</name>
        <dbReference type="ChEBI" id="CHEBI:60240"/>
        <label>3</label>
    </ligand>
</feature>
<feature type="binding site" evidence="1">
    <location>
        <position position="255"/>
    </location>
    <ligand>
        <name>substrate</name>
    </ligand>
</feature>
<keyword id="KW-0378">Hydrolase</keyword>
<keyword id="KW-0460">Magnesium</keyword>
<keyword id="KW-0464">Manganese</keyword>
<keyword id="KW-0479">Metal-binding</keyword>
<keyword id="KW-0520">NAD</keyword>
<keyword id="KW-1185">Reference proteome</keyword>
<keyword id="KW-0862">Zinc</keyword>
<proteinExistence type="inferred from homology"/>
<comment type="function">
    <text evidence="1">mRNA decapping enzyme that specifically removes the nicotinamide adenine dinucleotide (NAD) cap from a subset of mRNAs by hydrolyzing the diphosphate linkage to produce nicotinamide mononucleotide (NMN) and 5' monophosphate mRNA. The NAD-cap is present at the 5'-end of some mRNAs and stabilizes RNA against 5'-processing. Has preference for mRNAs with a 5'-end purine. Catalyzes the hydrolysis of a broad range of dinucleotide pyrophosphates.</text>
</comment>
<comment type="catalytic activity">
    <reaction evidence="1">
        <text>a 5'-end NAD(+)-phospho-ribonucleoside in mRNA + H2O = a 5'-end phospho-adenosine-phospho-ribonucleoside in mRNA + beta-nicotinamide D-ribonucleotide + 2 H(+)</text>
        <dbReference type="Rhea" id="RHEA:60876"/>
        <dbReference type="Rhea" id="RHEA-COMP:15698"/>
        <dbReference type="Rhea" id="RHEA-COMP:15719"/>
        <dbReference type="ChEBI" id="CHEBI:14649"/>
        <dbReference type="ChEBI" id="CHEBI:15377"/>
        <dbReference type="ChEBI" id="CHEBI:15378"/>
        <dbReference type="ChEBI" id="CHEBI:144029"/>
        <dbReference type="ChEBI" id="CHEBI:144051"/>
    </reaction>
    <physiologicalReaction direction="left-to-right" evidence="1">
        <dbReference type="Rhea" id="RHEA:60877"/>
    </physiologicalReaction>
</comment>
<comment type="catalytic activity">
    <reaction evidence="1">
        <text>NAD(+) + H2O = beta-nicotinamide D-ribonucleotide + AMP + 2 H(+)</text>
        <dbReference type="Rhea" id="RHEA:11800"/>
        <dbReference type="ChEBI" id="CHEBI:14649"/>
        <dbReference type="ChEBI" id="CHEBI:15377"/>
        <dbReference type="ChEBI" id="CHEBI:15378"/>
        <dbReference type="ChEBI" id="CHEBI:57540"/>
        <dbReference type="ChEBI" id="CHEBI:456215"/>
        <dbReference type="EC" id="3.6.1.22"/>
    </reaction>
</comment>
<comment type="catalytic activity">
    <reaction evidence="1">
        <text>NADH + H2O = reduced beta-nicotinamide D-ribonucleotide + AMP + 2 H(+)</text>
        <dbReference type="Rhea" id="RHEA:48868"/>
        <dbReference type="ChEBI" id="CHEBI:15377"/>
        <dbReference type="ChEBI" id="CHEBI:15378"/>
        <dbReference type="ChEBI" id="CHEBI:57945"/>
        <dbReference type="ChEBI" id="CHEBI:90832"/>
        <dbReference type="ChEBI" id="CHEBI:456215"/>
        <dbReference type="EC" id="3.6.1.22"/>
    </reaction>
</comment>
<comment type="cofactor">
    <cofactor evidence="1">
        <name>Mg(2+)</name>
        <dbReference type="ChEBI" id="CHEBI:18420"/>
    </cofactor>
    <cofactor evidence="1">
        <name>Mn(2+)</name>
        <dbReference type="ChEBI" id="CHEBI:29035"/>
    </cofactor>
    <text evidence="1">Divalent metal cations. Mg(2+) or Mn(2+).</text>
</comment>
<comment type="cofactor">
    <cofactor evidence="1">
        <name>Zn(2+)</name>
        <dbReference type="ChEBI" id="CHEBI:29105"/>
    </cofactor>
    <text evidence="1">Binds 1 zinc ion per subunit.</text>
</comment>
<comment type="subunit">
    <text evidence="1">Homodimer.</text>
</comment>
<comment type="similarity">
    <text evidence="1">Belongs to the Nudix hydrolase family. NudC subfamily.</text>
</comment>
<name>NUDC_PSEPK</name>
<protein>
    <recommendedName>
        <fullName evidence="1">NAD-capped RNA hydrolase NudC</fullName>
        <shortName evidence="1">DeNADding enzyme NudC</shortName>
        <ecNumber evidence="1">3.6.1.-</ecNumber>
    </recommendedName>
    <alternativeName>
        <fullName evidence="1">NADH pyrophosphatase</fullName>
        <ecNumber evidence="1">3.6.1.22</ecNumber>
    </alternativeName>
</protein>
<evidence type="ECO:0000255" key="1">
    <source>
        <dbReference type="HAMAP-Rule" id="MF_00297"/>
    </source>
</evidence>
<reference key="1">
    <citation type="journal article" date="2002" name="Environ. Microbiol.">
        <title>Complete genome sequence and comparative analysis of the metabolically versatile Pseudomonas putida KT2440.</title>
        <authorList>
            <person name="Nelson K.E."/>
            <person name="Weinel C."/>
            <person name="Paulsen I.T."/>
            <person name="Dodson R.J."/>
            <person name="Hilbert H."/>
            <person name="Martins dos Santos V.A.P."/>
            <person name="Fouts D.E."/>
            <person name="Gill S.R."/>
            <person name="Pop M."/>
            <person name="Holmes M."/>
            <person name="Brinkac L.M."/>
            <person name="Beanan M.J."/>
            <person name="DeBoy R.T."/>
            <person name="Daugherty S.C."/>
            <person name="Kolonay J.F."/>
            <person name="Madupu R."/>
            <person name="Nelson W.C."/>
            <person name="White O."/>
            <person name="Peterson J.D."/>
            <person name="Khouri H.M."/>
            <person name="Hance I."/>
            <person name="Chris Lee P."/>
            <person name="Holtzapple E.K."/>
            <person name="Scanlan D."/>
            <person name="Tran K."/>
            <person name="Moazzez A."/>
            <person name="Utterback T.R."/>
            <person name="Rizzo M."/>
            <person name="Lee K."/>
            <person name="Kosack D."/>
            <person name="Moestl D."/>
            <person name="Wedler H."/>
            <person name="Lauber J."/>
            <person name="Stjepandic D."/>
            <person name="Hoheisel J."/>
            <person name="Straetz M."/>
            <person name="Heim S."/>
            <person name="Kiewitz C."/>
            <person name="Eisen J.A."/>
            <person name="Timmis K.N."/>
            <person name="Duesterhoeft A."/>
            <person name="Tuemmler B."/>
            <person name="Fraser C.M."/>
        </authorList>
    </citation>
    <scope>NUCLEOTIDE SEQUENCE [LARGE SCALE GENOMIC DNA]</scope>
    <source>
        <strain>ATCC 47054 / DSM 6125 / CFBP 8728 / NCIMB 11950 / KT2440</strain>
    </source>
</reference>
<dbReference type="EC" id="3.6.1.-" evidence="1"/>
<dbReference type="EC" id="3.6.1.22" evidence="1"/>
<dbReference type="EMBL" id="AE015451">
    <property type="protein sequence ID" value="AAN69621.1"/>
    <property type="molecule type" value="Genomic_DNA"/>
</dbReference>
<dbReference type="RefSeq" id="NP_746157.1">
    <property type="nucleotide sequence ID" value="NC_002947.4"/>
</dbReference>
<dbReference type="RefSeq" id="WP_010954827.1">
    <property type="nucleotide sequence ID" value="NZ_CP169744.1"/>
</dbReference>
<dbReference type="SMR" id="Q88FQ8"/>
<dbReference type="STRING" id="160488.PP_4029"/>
<dbReference type="PaxDb" id="160488-PP_4029"/>
<dbReference type="KEGG" id="ppu:PP_4029"/>
<dbReference type="PATRIC" id="fig|160488.4.peg.4282"/>
<dbReference type="eggNOG" id="COG2816">
    <property type="taxonomic scope" value="Bacteria"/>
</dbReference>
<dbReference type="HOGENOM" id="CLU_037162_0_1_6"/>
<dbReference type="OrthoDB" id="9791656at2"/>
<dbReference type="PhylomeDB" id="Q88FQ8"/>
<dbReference type="BioCyc" id="PPUT160488:G1G01-4294-MONOMER"/>
<dbReference type="Proteomes" id="UP000000556">
    <property type="component" value="Chromosome"/>
</dbReference>
<dbReference type="GO" id="GO:0005829">
    <property type="term" value="C:cytosol"/>
    <property type="evidence" value="ECO:0007669"/>
    <property type="project" value="TreeGrafter"/>
</dbReference>
<dbReference type="GO" id="GO:0000287">
    <property type="term" value="F:magnesium ion binding"/>
    <property type="evidence" value="ECO:0007669"/>
    <property type="project" value="UniProtKB-UniRule"/>
</dbReference>
<dbReference type="GO" id="GO:0030145">
    <property type="term" value="F:manganese ion binding"/>
    <property type="evidence" value="ECO:0007669"/>
    <property type="project" value="UniProtKB-UniRule"/>
</dbReference>
<dbReference type="GO" id="GO:0000210">
    <property type="term" value="F:NAD+ diphosphatase activity"/>
    <property type="evidence" value="ECO:0007669"/>
    <property type="project" value="UniProtKB-UniRule"/>
</dbReference>
<dbReference type="GO" id="GO:0035529">
    <property type="term" value="F:NADH pyrophosphatase activity"/>
    <property type="evidence" value="ECO:0007669"/>
    <property type="project" value="TreeGrafter"/>
</dbReference>
<dbReference type="GO" id="GO:0110153">
    <property type="term" value="F:RNA NAD-cap (NMN-forming) hydrolase activity"/>
    <property type="evidence" value="ECO:0007669"/>
    <property type="project" value="RHEA"/>
</dbReference>
<dbReference type="GO" id="GO:0008270">
    <property type="term" value="F:zinc ion binding"/>
    <property type="evidence" value="ECO:0007669"/>
    <property type="project" value="UniProtKB-UniRule"/>
</dbReference>
<dbReference type="GO" id="GO:0019677">
    <property type="term" value="P:NAD catabolic process"/>
    <property type="evidence" value="ECO:0007669"/>
    <property type="project" value="TreeGrafter"/>
</dbReference>
<dbReference type="GO" id="GO:0006734">
    <property type="term" value="P:NADH metabolic process"/>
    <property type="evidence" value="ECO:0007669"/>
    <property type="project" value="TreeGrafter"/>
</dbReference>
<dbReference type="GO" id="GO:0006742">
    <property type="term" value="P:NADP catabolic process"/>
    <property type="evidence" value="ECO:0007669"/>
    <property type="project" value="TreeGrafter"/>
</dbReference>
<dbReference type="CDD" id="cd03429">
    <property type="entry name" value="NUDIX_NADH_pyrophosphatase_Nudt13"/>
    <property type="match status" value="1"/>
</dbReference>
<dbReference type="Gene3D" id="3.90.79.20">
    <property type="match status" value="1"/>
</dbReference>
<dbReference type="Gene3D" id="3.90.79.10">
    <property type="entry name" value="Nucleoside Triphosphate Pyrophosphohydrolase"/>
    <property type="match status" value="1"/>
</dbReference>
<dbReference type="HAMAP" id="MF_00297">
    <property type="entry name" value="Nudix_NudC"/>
    <property type="match status" value="1"/>
</dbReference>
<dbReference type="InterPro" id="IPR050241">
    <property type="entry name" value="NAD-cap_RNA_hydrolase_NudC"/>
</dbReference>
<dbReference type="InterPro" id="IPR015375">
    <property type="entry name" value="NADH_PPase-like_N"/>
</dbReference>
<dbReference type="InterPro" id="IPR049734">
    <property type="entry name" value="NudC-like_C"/>
</dbReference>
<dbReference type="InterPro" id="IPR015797">
    <property type="entry name" value="NUDIX_hydrolase-like_dom_sf"/>
</dbReference>
<dbReference type="InterPro" id="IPR000086">
    <property type="entry name" value="NUDIX_hydrolase_dom"/>
</dbReference>
<dbReference type="InterPro" id="IPR022925">
    <property type="entry name" value="RNA_Hydrolase_NudC"/>
</dbReference>
<dbReference type="InterPro" id="IPR015376">
    <property type="entry name" value="Znr_NADH_PPase"/>
</dbReference>
<dbReference type="NCBIfam" id="NF001299">
    <property type="entry name" value="PRK00241.1"/>
    <property type="match status" value="1"/>
</dbReference>
<dbReference type="PANTHER" id="PTHR42904:SF6">
    <property type="entry name" value="NAD-CAPPED RNA HYDROLASE NUDT12"/>
    <property type="match status" value="1"/>
</dbReference>
<dbReference type="PANTHER" id="PTHR42904">
    <property type="entry name" value="NUDIX HYDROLASE, NUDC SUBFAMILY"/>
    <property type="match status" value="1"/>
</dbReference>
<dbReference type="Pfam" id="PF00293">
    <property type="entry name" value="NUDIX"/>
    <property type="match status" value="1"/>
</dbReference>
<dbReference type="Pfam" id="PF09296">
    <property type="entry name" value="NUDIX-like"/>
    <property type="match status" value="1"/>
</dbReference>
<dbReference type="Pfam" id="PF09297">
    <property type="entry name" value="Zn_ribbon_NUD"/>
    <property type="match status" value="1"/>
</dbReference>
<dbReference type="SUPFAM" id="SSF55811">
    <property type="entry name" value="Nudix"/>
    <property type="match status" value="2"/>
</dbReference>
<dbReference type="PROSITE" id="PS51462">
    <property type="entry name" value="NUDIX"/>
    <property type="match status" value="1"/>
</dbReference>
<sequence length="276" mass="30868">MSARWTTAVLDPQMTGGLAVARSPEGFLVDANGALFPRDWLKRQDLDVLCEHGIGHFDGQPVFLLELRSATDVPGCSWRGLRAFMLEGDFDTYKVLGYAAQIGTWAREHRFCGSCGQPMTQIRWERAMYCQPCDLRSYPRISPSMIVLVTRGDEILLARSPRFVTGVYSTLAGFAEPGESAEDCLVREVREEVAVEVKNIQYVGSQCWPFPHSMMLGFHAEYAGGEIVMQPDEIEDAKWFSVHDLPPLPAGRSIARYLIDLYVARRLGCDIPAFPS</sequence>
<organism>
    <name type="scientific">Pseudomonas putida (strain ATCC 47054 / DSM 6125 / CFBP 8728 / NCIMB 11950 / KT2440)</name>
    <dbReference type="NCBI Taxonomy" id="160488"/>
    <lineage>
        <taxon>Bacteria</taxon>
        <taxon>Pseudomonadati</taxon>
        <taxon>Pseudomonadota</taxon>
        <taxon>Gammaproteobacteria</taxon>
        <taxon>Pseudomonadales</taxon>
        <taxon>Pseudomonadaceae</taxon>
        <taxon>Pseudomonas</taxon>
    </lineage>
</organism>
<gene>
    <name evidence="1" type="primary">nudC</name>
    <name type="ordered locus">PP_4029</name>
    <name type="ORF">PP4029</name>
</gene>
<accession>Q88FQ8</accession>